<organism>
    <name type="scientific">Nanoarchaeum equitans (strain Kin4-M)</name>
    <dbReference type="NCBI Taxonomy" id="228908"/>
    <lineage>
        <taxon>Archaea</taxon>
        <taxon>Nanobdellota</taxon>
        <taxon>Candidatus Nanoarchaeia</taxon>
        <taxon>Nanoarchaeales</taxon>
        <taxon>Nanoarchaeaceae</taxon>
        <taxon>Nanoarchaeum</taxon>
    </lineage>
</organism>
<proteinExistence type="inferred from homology"/>
<gene>
    <name type="primary">truA</name>
    <name type="ordered locus">NEQ333</name>
</gene>
<keyword id="KW-0413">Isomerase</keyword>
<keyword id="KW-1185">Reference proteome</keyword>
<keyword id="KW-0819">tRNA processing</keyword>
<name>TRUA_NANEQ</name>
<protein>
    <recommendedName>
        <fullName>tRNA pseudouridine synthase A</fullName>
        <ecNumber>5.4.99.12</ecNumber>
    </recommendedName>
    <alternativeName>
        <fullName>tRNA pseudouridine(38-40) synthase</fullName>
    </alternativeName>
    <alternativeName>
        <fullName>tRNA pseudouridylate synthase I</fullName>
    </alternativeName>
    <alternativeName>
        <fullName>tRNA-uridine isomerase I</fullName>
    </alternativeName>
</protein>
<evidence type="ECO:0000250" key="1"/>
<evidence type="ECO:0000305" key="2"/>
<comment type="function">
    <text evidence="1">Formation of pseudouridine at positions 38, 39 and 40 in the anticodon stem and loop of transfer RNAs.</text>
</comment>
<comment type="catalytic activity">
    <reaction>
        <text>uridine(38/39/40) in tRNA = pseudouridine(38/39/40) in tRNA</text>
        <dbReference type="Rhea" id="RHEA:22376"/>
        <dbReference type="Rhea" id="RHEA-COMP:10085"/>
        <dbReference type="Rhea" id="RHEA-COMP:10087"/>
        <dbReference type="ChEBI" id="CHEBI:65314"/>
        <dbReference type="ChEBI" id="CHEBI:65315"/>
        <dbReference type="EC" id="5.4.99.12"/>
    </reaction>
</comment>
<comment type="similarity">
    <text evidence="2">Belongs to the tRNA pseudouridine synthase TruA family.</text>
</comment>
<feature type="chain" id="PRO_0000057508" description="tRNA pseudouridine synthase A">
    <location>
        <begin position="1"/>
        <end position="209"/>
    </location>
</feature>
<feature type="active site" description="Nucleophile" evidence="1">
    <location>
        <position position="28"/>
    </location>
</feature>
<reference key="1">
    <citation type="journal article" date="2003" name="Proc. Natl. Acad. Sci. U.S.A.">
        <title>The genome of Nanoarchaeum equitans: insights into early archaeal evolution and derived parasitism.</title>
        <authorList>
            <person name="Waters E."/>
            <person name="Hohn M.J."/>
            <person name="Ahel I."/>
            <person name="Graham D.E."/>
            <person name="Adams M.D."/>
            <person name="Barnstead M."/>
            <person name="Beeson K.Y."/>
            <person name="Bibbs L."/>
            <person name="Bolanos R."/>
            <person name="Keller M."/>
            <person name="Kretz K."/>
            <person name="Lin X."/>
            <person name="Mathur E."/>
            <person name="Ni J."/>
            <person name="Podar M."/>
            <person name="Richardson T."/>
            <person name="Sutton G.G."/>
            <person name="Simon M."/>
            <person name="Soell D."/>
            <person name="Stetter K.O."/>
            <person name="Short J.M."/>
            <person name="Noorderwier M."/>
        </authorList>
    </citation>
    <scope>NUCLEOTIDE SEQUENCE [LARGE SCALE GENOMIC DNA]</scope>
    <source>
        <strain>Kin4-M</strain>
    </source>
</reference>
<dbReference type="EC" id="5.4.99.12"/>
<dbReference type="EMBL" id="AE017199">
    <property type="protein sequence ID" value="AAR39182.1"/>
    <property type="molecule type" value="Genomic_DNA"/>
</dbReference>
<dbReference type="SMR" id="P60354"/>
<dbReference type="STRING" id="228908.NEQ333"/>
<dbReference type="EnsemblBacteria" id="AAR39182">
    <property type="protein sequence ID" value="AAR39182"/>
    <property type="gene ID" value="NEQ333"/>
</dbReference>
<dbReference type="KEGG" id="neq:NEQ333"/>
<dbReference type="HOGENOM" id="CLU_1313155_0_0_2"/>
<dbReference type="Proteomes" id="UP000000578">
    <property type="component" value="Chromosome"/>
</dbReference>
<dbReference type="GO" id="GO:0005737">
    <property type="term" value="C:cytoplasm"/>
    <property type="evidence" value="ECO:0007669"/>
    <property type="project" value="TreeGrafter"/>
</dbReference>
<dbReference type="GO" id="GO:0003723">
    <property type="term" value="F:RNA binding"/>
    <property type="evidence" value="ECO:0007669"/>
    <property type="project" value="InterPro"/>
</dbReference>
<dbReference type="GO" id="GO:0160147">
    <property type="term" value="F:tRNA pseudouridine(38-40) synthase activity"/>
    <property type="evidence" value="ECO:0007669"/>
    <property type="project" value="UniProtKB-EC"/>
</dbReference>
<dbReference type="GO" id="GO:1990481">
    <property type="term" value="P:mRNA pseudouridine synthesis"/>
    <property type="evidence" value="ECO:0007669"/>
    <property type="project" value="TreeGrafter"/>
</dbReference>
<dbReference type="GO" id="GO:0031119">
    <property type="term" value="P:tRNA pseudouridine synthesis"/>
    <property type="evidence" value="ECO:0007669"/>
    <property type="project" value="TreeGrafter"/>
</dbReference>
<dbReference type="Gene3D" id="3.30.70.660">
    <property type="entry name" value="Pseudouridine synthase I, catalytic domain, C-terminal subdomain"/>
    <property type="match status" value="1"/>
</dbReference>
<dbReference type="InterPro" id="IPR020103">
    <property type="entry name" value="PsdUridine_synth_cat_dom_sf"/>
</dbReference>
<dbReference type="InterPro" id="IPR001406">
    <property type="entry name" value="PsdUridine_synth_TruA"/>
</dbReference>
<dbReference type="InterPro" id="IPR020097">
    <property type="entry name" value="PsdUridine_synth_TruA_a/b_dom"/>
</dbReference>
<dbReference type="InterPro" id="IPR020095">
    <property type="entry name" value="PsdUridine_synth_TruA_C"/>
</dbReference>
<dbReference type="PANTHER" id="PTHR11142">
    <property type="entry name" value="PSEUDOURIDYLATE SYNTHASE"/>
    <property type="match status" value="1"/>
</dbReference>
<dbReference type="PANTHER" id="PTHR11142:SF5">
    <property type="entry name" value="TRNA PSEUDOURIDINE(38_39) SYNTHASE"/>
    <property type="match status" value="1"/>
</dbReference>
<dbReference type="Pfam" id="PF01416">
    <property type="entry name" value="PseudoU_synth_1"/>
    <property type="match status" value="1"/>
</dbReference>
<dbReference type="SUPFAM" id="SSF55120">
    <property type="entry name" value="Pseudouridine synthase"/>
    <property type="match status" value="1"/>
</dbReference>
<sequence>MYYYKFWYFRPNKAIAQLIKGKWISRTDKYVSARENYFYGNIPKVLPKNVILLGEEPINKVLSKEYKYFLPKDKAIEQISYLHKVGNIIVRKTKIKVKGLPNLDLMKEAAKHFIGKKDFTNFTIEREAKNPLCTIIKFDIEERKDYYVFSIVGDRFLYHMVRKIISFIVSVGYKIYPLEYIDLVFKERLNPKPKDADPKFLWLWKINKT</sequence>
<accession>P60354</accession>